<gene>
    <name type="primary">NAD11</name>
</gene>
<accession>O21241</accession>
<protein>
    <recommendedName>
        <fullName>NADH-ubiquinone oxidoreductase 75 kDa subunit</fullName>
        <ecNumber>7.1.1.2</ecNumber>
    </recommendedName>
    <alternativeName>
        <fullName>Complex I-75kD</fullName>
        <shortName>CI-75kD</shortName>
    </alternativeName>
    <alternativeName>
        <fullName>NADH dehydrogenase subunit 11</fullName>
    </alternativeName>
</protein>
<sequence length="691" mass="77718">MVNVFVDGLSVEVKKGATILQACAQVGIEIPRFCYHERLSIAGNCRMCLVEVEKSPKPVASCAMPVMDNMKIFTNTPLVKKAREGVLEFLLVNHPLDCPICDQGGECDLQDLTMVYGSDRGRFHEYKRGVEDKNIGPLVKTVMTRCIHCTRCVRFATEVAGVPDLGTVGRGRDTEISTYIQKVFNSELSGNVIDLCPVGALTSKPYAFTARSWELQSTESIDVSDAIGSNIRIDVRGSEIMRILPRLNEDVNEEWISDKARFCYDGLKRQRLNNPIIKENGQYKTVTWEKAFNFILKNLQEIQNSNRIVGVVGNLMDVESILLFKELLNKLGSSKIYLESSTPILQLNDDEKEDQILNNADFRNNYISNTPLAKIEESDLCLLIGTNIRLEAPLLNTRIRKRYLQGNYSVYSVGPTNNLTYNTENLGNDISTLLEISEGRHPFCKKLMKSKKPLIIIGTHVLQRTDGTSIIELVKTLFKYTQIKTSNWNGFNILHTSASSVGALDLGIGSTKRYSEKISNSKIEKHFIYLLGADEIRIENSKEHFIVYQGHHGDYGANIADVILPGSAYTEKTATYVNVEGRVQNTKSAFYAPGNAREDWKIIRALSEVLNKKLPYDSFEDIHTRFMSIAPHLLKVNAIEKNKIVIENSLPFKGLIKNIGFKPLFNNFYLTNAICRSSQTMAKCSSIYKLN</sequence>
<name>NDUS1_RECAM</name>
<geneLocation type="mitochondrion"/>
<dbReference type="EC" id="7.1.1.2"/>
<dbReference type="EMBL" id="AF007261">
    <property type="protein sequence ID" value="AAD11868.1"/>
    <property type="molecule type" value="Genomic_DNA"/>
</dbReference>
<dbReference type="PIR" id="S78135">
    <property type="entry name" value="S78135"/>
</dbReference>
<dbReference type="RefSeq" id="NP_044753.1">
    <property type="nucleotide sequence ID" value="NC_001823.1"/>
</dbReference>
<dbReference type="SMR" id="O21241"/>
<dbReference type="GeneID" id="801135"/>
<dbReference type="GO" id="GO:0005743">
    <property type="term" value="C:mitochondrial inner membrane"/>
    <property type="evidence" value="ECO:0007669"/>
    <property type="project" value="UniProtKB-SubCell"/>
</dbReference>
<dbReference type="GO" id="GO:0051537">
    <property type="term" value="F:2 iron, 2 sulfur cluster binding"/>
    <property type="evidence" value="ECO:0007669"/>
    <property type="project" value="UniProtKB-KW"/>
</dbReference>
<dbReference type="GO" id="GO:0051539">
    <property type="term" value="F:4 iron, 4 sulfur cluster binding"/>
    <property type="evidence" value="ECO:0007669"/>
    <property type="project" value="UniProtKB-KW"/>
</dbReference>
<dbReference type="GO" id="GO:0046872">
    <property type="term" value="F:metal ion binding"/>
    <property type="evidence" value="ECO:0007669"/>
    <property type="project" value="UniProtKB-KW"/>
</dbReference>
<dbReference type="GO" id="GO:0008137">
    <property type="term" value="F:NADH dehydrogenase (ubiquinone) activity"/>
    <property type="evidence" value="ECO:0007669"/>
    <property type="project" value="UniProtKB-EC"/>
</dbReference>
<dbReference type="GO" id="GO:0042773">
    <property type="term" value="P:ATP synthesis coupled electron transport"/>
    <property type="evidence" value="ECO:0007669"/>
    <property type="project" value="InterPro"/>
</dbReference>
<dbReference type="CDD" id="cd00207">
    <property type="entry name" value="fer2"/>
    <property type="match status" value="1"/>
</dbReference>
<dbReference type="CDD" id="cd02773">
    <property type="entry name" value="MopB_Res-Cmplx1_Nad11"/>
    <property type="match status" value="1"/>
</dbReference>
<dbReference type="FunFam" id="3.10.20.740:FF:000001">
    <property type="entry name" value="NADH-quinone oxidoreductase subunit G"/>
    <property type="match status" value="1"/>
</dbReference>
<dbReference type="FunFam" id="3.30.200.210:FF:000002">
    <property type="entry name" value="NADH-ubiquinone oxidoreductase 75 kDa subunit"/>
    <property type="match status" value="1"/>
</dbReference>
<dbReference type="FunFam" id="3.30.70.20:FF:000002">
    <property type="entry name" value="NADH-ubiquinone oxidoreductase 75 kDa subunit"/>
    <property type="match status" value="1"/>
</dbReference>
<dbReference type="Gene3D" id="3.10.20.740">
    <property type="match status" value="1"/>
</dbReference>
<dbReference type="Gene3D" id="3.30.200.210">
    <property type="match status" value="1"/>
</dbReference>
<dbReference type="Gene3D" id="3.30.70.20">
    <property type="match status" value="1"/>
</dbReference>
<dbReference type="Gene3D" id="3.40.50.740">
    <property type="match status" value="1"/>
</dbReference>
<dbReference type="InterPro" id="IPR036010">
    <property type="entry name" value="2Fe-2S_ferredoxin-like_sf"/>
</dbReference>
<dbReference type="InterPro" id="IPR001041">
    <property type="entry name" value="2Fe-2S_ferredoxin-type"/>
</dbReference>
<dbReference type="InterPro" id="IPR006656">
    <property type="entry name" value="Mopterin_OxRdtase"/>
</dbReference>
<dbReference type="InterPro" id="IPR006963">
    <property type="entry name" value="Mopterin_OxRdtase_4Fe-4S_dom"/>
</dbReference>
<dbReference type="InterPro" id="IPR000283">
    <property type="entry name" value="NADH_UbQ_OxRdtase_75kDa_su_CS"/>
</dbReference>
<dbReference type="InterPro" id="IPR054351">
    <property type="entry name" value="NADH_UbQ_OxRdtase_ferredoxin"/>
</dbReference>
<dbReference type="InterPro" id="IPR010228">
    <property type="entry name" value="NADH_UbQ_OxRdtase_Gsu"/>
</dbReference>
<dbReference type="InterPro" id="IPR019574">
    <property type="entry name" value="NADH_UbQ_OxRdtase_Gsu_4Fe4S-bd"/>
</dbReference>
<dbReference type="InterPro" id="IPR015405">
    <property type="entry name" value="NDUFS1-like_C"/>
</dbReference>
<dbReference type="InterPro" id="IPR050123">
    <property type="entry name" value="Prok_molybdopt-oxidoreductase"/>
</dbReference>
<dbReference type="NCBIfam" id="TIGR01973">
    <property type="entry name" value="NuoG"/>
    <property type="match status" value="1"/>
</dbReference>
<dbReference type="PANTHER" id="PTHR43105:SF13">
    <property type="entry name" value="NADH-UBIQUINONE OXIDOREDUCTASE 75 KDA SUBUNIT, MITOCHONDRIAL"/>
    <property type="match status" value="1"/>
</dbReference>
<dbReference type="PANTHER" id="PTHR43105">
    <property type="entry name" value="RESPIRATORY NITRATE REDUCTASE"/>
    <property type="match status" value="1"/>
</dbReference>
<dbReference type="Pfam" id="PF13510">
    <property type="entry name" value="Fer2_4"/>
    <property type="match status" value="1"/>
</dbReference>
<dbReference type="Pfam" id="PF22151">
    <property type="entry name" value="Fer4_NDSU1"/>
    <property type="match status" value="1"/>
</dbReference>
<dbReference type="Pfam" id="PF22117">
    <property type="entry name" value="Fer4_Nqo3"/>
    <property type="match status" value="1"/>
</dbReference>
<dbReference type="Pfam" id="PF00384">
    <property type="entry name" value="Molybdopterin"/>
    <property type="match status" value="1"/>
</dbReference>
<dbReference type="Pfam" id="PF10588">
    <property type="entry name" value="NADH-G_4Fe-4S_3"/>
    <property type="match status" value="1"/>
</dbReference>
<dbReference type="Pfam" id="PF09326">
    <property type="entry name" value="NADH_dhqG_C"/>
    <property type="match status" value="1"/>
</dbReference>
<dbReference type="SMART" id="SM00929">
    <property type="entry name" value="NADH-G_4Fe-4S_3"/>
    <property type="match status" value="1"/>
</dbReference>
<dbReference type="SUPFAM" id="SSF54292">
    <property type="entry name" value="2Fe-2S ferredoxin-like"/>
    <property type="match status" value="1"/>
</dbReference>
<dbReference type="SUPFAM" id="SSF54862">
    <property type="entry name" value="4Fe-4S ferredoxins"/>
    <property type="match status" value="1"/>
</dbReference>
<dbReference type="SUPFAM" id="SSF53706">
    <property type="entry name" value="Formate dehydrogenase/DMSO reductase, domains 1-3"/>
    <property type="match status" value="1"/>
</dbReference>
<dbReference type="PROSITE" id="PS51085">
    <property type="entry name" value="2FE2S_FER_2"/>
    <property type="match status" value="1"/>
</dbReference>
<dbReference type="PROSITE" id="PS51839">
    <property type="entry name" value="4FE4S_HC3"/>
    <property type="match status" value="1"/>
</dbReference>
<dbReference type="PROSITE" id="PS51669">
    <property type="entry name" value="4FE4S_MOW_BIS_MGD"/>
    <property type="match status" value="1"/>
</dbReference>
<dbReference type="PROSITE" id="PS00641">
    <property type="entry name" value="COMPLEX1_75K_1"/>
    <property type="match status" value="1"/>
</dbReference>
<dbReference type="PROSITE" id="PS00642">
    <property type="entry name" value="COMPLEX1_75K_2"/>
    <property type="match status" value="1"/>
</dbReference>
<dbReference type="PROSITE" id="PS00643">
    <property type="entry name" value="COMPLEX1_75K_3"/>
    <property type="match status" value="1"/>
</dbReference>
<evidence type="ECO:0000250" key="1"/>
<evidence type="ECO:0000255" key="2">
    <source>
        <dbReference type="PROSITE-ProRule" id="PRU00465"/>
    </source>
</evidence>
<evidence type="ECO:0000255" key="3">
    <source>
        <dbReference type="PROSITE-ProRule" id="PRU01004"/>
    </source>
</evidence>
<evidence type="ECO:0000255" key="4">
    <source>
        <dbReference type="PROSITE-ProRule" id="PRU01184"/>
    </source>
</evidence>
<evidence type="ECO:0000305" key="5"/>
<proteinExistence type="inferred from homology"/>
<comment type="function">
    <text evidence="1">Core subunit of the mitochondrial membrane respiratory chain NADH dehydrogenase (Complex I) that is believed to belong to the minimal assembly required for catalysis. Complex I functions in the transfer of electrons from NADH to the respiratory chain. The immediate electron acceptor for the enzyme is believed to be ubiquinone (By similarity). This is the largest subunit of complex I and it is a component of the iron-sulfur (IP) fragment of the enzyme. It may form part of the active site crevice where NADH is oxidized (By similarity).</text>
</comment>
<comment type="catalytic activity">
    <reaction>
        <text>a ubiquinone + NADH + 5 H(+)(in) = a ubiquinol + NAD(+) + 4 H(+)(out)</text>
        <dbReference type="Rhea" id="RHEA:29091"/>
        <dbReference type="Rhea" id="RHEA-COMP:9565"/>
        <dbReference type="Rhea" id="RHEA-COMP:9566"/>
        <dbReference type="ChEBI" id="CHEBI:15378"/>
        <dbReference type="ChEBI" id="CHEBI:16389"/>
        <dbReference type="ChEBI" id="CHEBI:17976"/>
        <dbReference type="ChEBI" id="CHEBI:57540"/>
        <dbReference type="ChEBI" id="CHEBI:57945"/>
        <dbReference type="EC" id="7.1.1.2"/>
    </reaction>
</comment>
<comment type="cofactor">
    <cofactor evidence="1">
        <name>[2Fe-2S] cluster</name>
        <dbReference type="ChEBI" id="CHEBI:190135"/>
    </cofactor>
    <text evidence="1">Binds 1 [2Fe-2S] cluster per subunit.</text>
</comment>
<comment type="cofactor">
    <cofactor evidence="1">
        <name>[4Fe-4S] cluster</name>
        <dbReference type="ChEBI" id="CHEBI:49883"/>
    </cofactor>
    <text evidence="1">Binds 2 [4Fe-4S] clusters per subunit.</text>
</comment>
<comment type="subunit">
    <text evidence="1">Complex I is composed of about 30 different subunits.</text>
</comment>
<comment type="subcellular location">
    <subcellularLocation>
        <location evidence="1">Mitochondrion inner membrane</location>
    </subcellularLocation>
    <text evidence="1">Matrix and cytoplasmic side of the mitochondrial inner membrane.</text>
</comment>
<comment type="similarity">
    <text evidence="5">Belongs to the complex I 75 kDa subunit family.</text>
</comment>
<reference key="1">
    <citation type="journal article" date="1997" name="Nature">
        <title>An ancestral mitochondrial DNA resembling a eubacterial genome in miniature.</title>
        <authorList>
            <person name="Lang B.F."/>
            <person name="Burger G."/>
            <person name="O'Kelly C.J."/>
            <person name="Cedergren R."/>
            <person name="Golding G.B."/>
            <person name="Lemieux C."/>
            <person name="Sankoff D."/>
            <person name="Turmel M."/>
            <person name="Gray M.W."/>
        </authorList>
    </citation>
    <scope>NUCLEOTIDE SEQUENCE [GENOMIC DNA]</scope>
    <source>
        <strain>ATCC 50394</strain>
    </source>
</reference>
<organism>
    <name type="scientific">Reclinomonas americana</name>
    <dbReference type="NCBI Taxonomy" id="48483"/>
    <lineage>
        <taxon>Eukaryota</taxon>
        <taxon>Discoba</taxon>
        <taxon>Jakobida</taxon>
        <taxon>Histionina</taxon>
        <taxon>Histionidae</taxon>
        <taxon>Reclinomonas</taxon>
    </lineage>
</organism>
<keyword id="KW-0001">2Fe-2S</keyword>
<keyword id="KW-0004">4Fe-4S</keyword>
<keyword id="KW-0249">Electron transport</keyword>
<keyword id="KW-0408">Iron</keyword>
<keyword id="KW-0411">Iron-sulfur</keyword>
<keyword id="KW-0472">Membrane</keyword>
<keyword id="KW-0479">Metal-binding</keyword>
<keyword id="KW-0496">Mitochondrion</keyword>
<keyword id="KW-0999">Mitochondrion inner membrane</keyword>
<keyword id="KW-0520">NAD</keyword>
<keyword id="KW-0560">Oxidoreductase</keyword>
<keyword id="KW-0679">Respiratory chain</keyword>
<keyword id="KW-1278">Translocase</keyword>
<keyword id="KW-0813">Transport</keyword>
<keyword id="KW-0830">Ubiquinone</keyword>
<feature type="chain" id="PRO_0000118537" description="NADH-ubiquinone oxidoreductase 75 kDa subunit">
    <location>
        <begin position="1"/>
        <end position="691"/>
    </location>
</feature>
<feature type="domain" description="2Fe-2S ferredoxin-type" evidence="2">
    <location>
        <begin position="1"/>
        <end position="78"/>
    </location>
</feature>
<feature type="domain" description="4Fe-4S His(Cys)3-ligated-type" evidence="4">
    <location>
        <begin position="78"/>
        <end position="117"/>
    </location>
</feature>
<feature type="domain" description="4Fe-4S Mo/W bis-MGD-type" evidence="3">
    <location>
        <begin position="215"/>
        <end position="271"/>
    </location>
</feature>
<feature type="binding site" evidence="1">
    <location>
        <position position="34"/>
    </location>
    <ligand>
        <name>[2Fe-2S] cluster</name>
        <dbReference type="ChEBI" id="CHEBI:190135"/>
    </ligand>
</feature>
<feature type="binding site" evidence="1">
    <location>
        <position position="45"/>
    </location>
    <ligand>
        <name>[2Fe-2S] cluster</name>
        <dbReference type="ChEBI" id="CHEBI:190135"/>
    </ligand>
</feature>
<feature type="binding site" evidence="1">
    <location>
        <position position="48"/>
    </location>
    <ligand>
        <name>[2Fe-2S] cluster</name>
        <dbReference type="ChEBI" id="CHEBI:190135"/>
    </ligand>
</feature>
<feature type="binding site" evidence="1">
    <location>
        <position position="62"/>
    </location>
    <ligand>
        <name>[2Fe-2S] cluster</name>
        <dbReference type="ChEBI" id="CHEBI:190135"/>
    </ligand>
</feature>
<feature type="binding site" evidence="4">
    <location>
        <position position="94"/>
    </location>
    <ligand>
        <name>[4Fe-4S] cluster</name>
        <dbReference type="ChEBI" id="CHEBI:49883"/>
        <label>1</label>
    </ligand>
</feature>
<feature type="binding site" evidence="4">
    <location>
        <position position="98"/>
    </location>
    <ligand>
        <name>[4Fe-4S] cluster</name>
        <dbReference type="ChEBI" id="CHEBI:49883"/>
        <label>1</label>
    </ligand>
</feature>
<feature type="binding site" evidence="4">
    <location>
        <position position="101"/>
    </location>
    <ligand>
        <name>[4Fe-4S] cluster</name>
        <dbReference type="ChEBI" id="CHEBI:49883"/>
        <label>1</label>
    </ligand>
</feature>
<feature type="binding site" evidence="4">
    <location>
        <position position="107"/>
    </location>
    <ligand>
        <name>[4Fe-4S] cluster</name>
        <dbReference type="ChEBI" id="CHEBI:49883"/>
        <label>1</label>
    </ligand>
</feature>
<feature type="binding site" evidence="1">
    <location>
        <position position="146"/>
    </location>
    <ligand>
        <name>[4Fe-4S] cluster</name>
        <dbReference type="ChEBI" id="CHEBI:49883"/>
        <label>2</label>
    </ligand>
</feature>
<feature type="binding site" evidence="1">
    <location>
        <position position="149"/>
    </location>
    <ligand>
        <name>[4Fe-4S] cluster</name>
        <dbReference type="ChEBI" id="CHEBI:49883"/>
        <label>2</label>
    </ligand>
</feature>
<feature type="binding site" evidence="1">
    <location>
        <position position="152"/>
    </location>
    <ligand>
        <name>[4Fe-4S] cluster</name>
        <dbReference type="ChEBI" id="CHEBI:49883"/>
        <label>2</label>
    </ligand>
</feature>
<feature type="binding site" evidence="1">
    <location>
        <position position="196"/>
    </location>
    <ligand>
        <name>[4Fe-4S] cluster</name>
        <dbReference type="ChEBI" id="CHEBI:49883"/>
        <label>2</label>
    </ligand>
</feature>